<feature type="signal peptide" evidence="1">
    <location>
        <begin position="1"/>
        <end position="30"/>
    </location>
</feature>
<feature type="chain" id="PRO_0000342036" description="Cytochrome f">
    <location>
        <begin position="31"/>
        <end position="324"/>
    </location>
</feature>
<feature type="transmembrane region" description="Helical" evidence="1">
    <location>
        <begin position="290"/>
        <end position="310"/>
    </location>
</feature>
<feature type="binding site" description="axial binding residue" evidence="1">
    <location>
        <position position="42"/>
    </location>
    <ligand>
        <name>heme</name>
        <dbReference type="ChEBI" id="CHEBI:30413"/>
    </ligand>
    <ligandPart>
        <name>Fe</name>
        <dbReference type="ChEBI" id="CHEBI:18248"/>
    </ligandPart>
</feature>
<feature type="binding site" description="covalent" evidence="1">
    <location>
        <position position="62"/>
    </location>
    <ligand>
        <name>heme</name>
        <dbReference type="ChEBI" id="CHEBI:30413"/>
    </ligand>
</feature>
<feature type="binding site" description="covalent" evidence="1">
    <location>
        <position position="65"/>
    </location>
    <ligand>
        <name>heme</name>
        <dbReference type="ChEBI" id="CHEBI:30413"/>
    </ligand>
</feature>
<feature type="binding site" description="axial binding residue" evidence="1">
    <location>
        <position position="66"/>
    </location>
    <ligand>
        <name>heme</name>
        <dbReference type="ChEBI" id="CHEBI:30413"/>
    </ligand>
    <ligandPart>
        <name>Fe</name>
        <dbReference type="ChEBI" id="CHEBI:18248"/>
    </ligandPart>
</feature>
<dbReference type="EMBL" id="AP008231">
    <property type="protein sequence ID" value="BAD78509.1"/>
    <property type="molecule type" value="Genomic_DNA"/>
</dbReference>
<dbReference type="RefSeq" id="WP_011242633.1">
    <property type="nucleotide sequence ID" value="NZ_CP085785.1"/>
</dbReference>
<dbReference type="SMR" id="Q5N5A9"/>
<dbReference type="GeneID" id="72430091"/>
<dbReference type="KEGG" id="syc:syc0319_d"/>
<dbReference type="eggNOG" id="COG0739">
    <property type="taxonomic scope" value="Bacteria"/>
</dbReference>
<dbReference type="Proteomes" id="UP000001175">
    <property type="component" value="Chromosome"/>
</dbReference>
<dbReference type="GO" id="GO:0031676">
    <property type="term" value="C:plasma membrane-derived thylakoid membrane"/>
    <property type="evidence" value="ECO:0007669"/>
    <property type="project" value="UniProtKB-SubCell"/>
</dbReference>
<dbReference type="GO" id="GO:0009055">
    <property type="term" value="F:electron transfer activity"/>
    <property type="evidence" value="ECO:0007669"/>
    <property type="project" value="UniProtKB-UniRule"/>
</dbReference>
<dbReference type="GO" id="GO:0020037">
    <property type="term" value="F:heme binding"/>
    <property type="evidence" value="ECO:0007669"/>
    <property type="project" value="InterPro"/>
</dbReference>
<dbReference type="GO" id="GO:0005506">
    <property type="term" value="F:iron ion binding"/>
    <property type="evidence" value="ECO:0007669"/>
    <property type="project" value="InterPro"/>
</dbReference>
<dbReference type="GO" id="GO:0015979">
    <property type="term" value="P:photosynthesis"/>
    <property type="evidence" value="ECO:0007669"/>
    <property type="project" value="UniProtKB-UniRule"/>
</dbReference>
<dbReference type="FunFam" id="2.60.40.830:FF:000001">
    <property type="entry name" value="Cytochrome f"/>
    <property type="match status" value="1"/>
</dbReference>
<dbReference type="Gene3D" id="2.40.50.100">
    <property type="match status" value="1"/>
</dbReference>
<dbReference type="Gene3D" id="2.60.40.830">
    <property type="entry name" value="Cytochrome f large domain"/>
    <property type="match status" value="1"/>
</dbReference>
<dbReference type="Gene3D" id="1.20.5.700">
    <property type="entry name" value="Single helix bin"/>
    <property type="match status" value="1"/>
</dbReference>
<dbReference type="HAMAP" id="MF_00610">
    <property type="entry name" value="Cytb6_f_cytF"/>
    <property type="match status" value="1"/>
</dbReference>
<dbReference type="InterPro" id="IPR024058">
    <property type="entry name" value="Cyt-f_TM"/>
</dbReference>
<dbReference type="InterPro" id="IPR002325">
    <property type="entry name" value="Cyt_f"/>
</dbReference>
<dbReference type="InterPro" id="IPR024094">
    <property type="entry name" value="Cyt_f_lg_dom"/>
</dbReference>
<dbReference type="InterPro" id="IPR036826">
    <property type="entry name" value="Cyt_f_lg_dom_sf"/>
</dbReference>
<dbReference type="InterPro" id="IPR011054">
    <property type="entry name" value="Rudment_hybrid_motif"/>
</dbReference>
<dbReference type="NCBIfam" id="NF002736">
    <property type="entry name" value="PRK02693.1"/>
    <property type="match status" value="1"/>
</dbReference>
<dbReference type="PANTHER" id="PTHR33288">
    <property type="match status" value="1"/>
</dbReference>
<dbReference type="PANTHER" id="PTHR33288:SF10">
    <property type="entry name" value="CYTOCHROME F"/>
    <property type="match status" value="1"/>
</dbReference>
<dbReference type="Pfam" id="PF01333">
    <property type="entry name" value="Apocytochr_F_C"/>
    <property type="match status" value="1"/>
</dbReference>
<dbReference type="Pfam" id="PF16639">
    <property type="entry name" value="Apocytochr_F_N"/>
    <property type="match status" value="1"/>
</dbReference>
<dbReference type="PRINTS" id="PR00610">
    <property type="entry name" value="CYTOCHROMEF"/>
</dbReference>
<dbReference type="SUPFAM" id="SSF103431">
    <property type="entry name" value="Cytochrome f subunit of the cytochrome b6f complex, transmembrane anchor"/>
    <property type="match status" value="1"/>
</dbReference>
<dbReference type="SUPFAM" id="SSF49441">
    <property type="entry name" value="Cytochrome f, large domain"/>
    <property type="match status" value="1"/>
</dbReference>
<dbReference type="SUPFAM" id="SSF51246">
    <property type="entry name" value="Rudiment single hybrid motif"/>
    <property type="match status" value="1"/>
</dbReference>
<dbReference type="PROSITE" id="PS51010">
    <property type="entry name" value="CYTF"/>
    <property type="match status" value="1"/>
</dbReference>
<protein>
    <recommendedName>
        <fullName evidence="1">Cytochrome f</fullName>
    </recommendedName>
</protein>
<comment type="function">
    <text evidence="1">Component of the cytochrome b6-f complex, which mediates electron transfer between photosystem II (PSII) and photosystem I (PSI), cyclic electron flow around PSI, and state transitions.</text>
</comment>
<comment type="cofactor">
    <cofactor evidence="1">
        <name>heme</name>
        <dbReference type="ChEBI" id="CHEBI:30413"/>
    </cofactor>
    <text evidence="1">Binds 1 heme group covalently.</text>
</comment>
<comment type="subunit">
    <text evidence="1">The 4 large subunits of the cytochrome b6-f complex are cytochrome b6, subunit IV (17 kDa polypeptide, PetD), cytochrome f and the Rieske protein, while the 4 small subunits are PetG, PetL, PetM and PetN. The complex functions as a dimer.</text>
</comment>
<comment type="subcellular location">
    <subcellularLocation>
        <location evidence="1">Cellular thylakoid membrane</location>
        <topology evidence="1">Single-pass membrane protein</topology>
    </subcellularLocation>
</comment>
<comment type="similarity">
    <text evidence="1">Belongs to the cytochrome f family.</text>
</comment>
<name>CYF_SYNP6</name>
<keyword id="KW-0249">Electron transport</keyword>
<keyword id="KW-0349">Heme</keyword>
<keyword id="KW-0408">Iron</keyword>
<keyword id="KW-0472">Membrane</keyword>
<keyword id="KW-0479">Metal-binding</keyword>
<keyword id="KW-0602">Photosynthesis</keyword>
<keyword id="KW-0732">Signal</keyword>
<keyword id="KW-0793">Thylakoid</keyword>
<keyword id="KW-0812">Transmembrane</keyword>
<keyword id="KW-1133">Transmembrane helix</keyword>
<keyword id="KW-0813">Transport</keyword>
<sequence length="324" mass="34454">MNMRFSPKALVRQLGRLSLVACLSLGLLGAADWLQPQAAAAYPFWAQENYASPREATGKIVCANCHLAKKPTEVEVPHSVLPDTVFKAVVKIPYDRSSQQVLGDGSKGGLNVGAVLMLPDGFKLAPEDRISEELKEEIGNVYFTNYSADQENIILVGPLPGDDHQEIVFPVLSPDPAKDKNVFFGKYQIHVGGNRGRGQVYPTGQKSNNGVYTASAAGVIDAVTETASGYDIVIRKADGSTVTDAVPAGPSPIVAVGSEVAAGAALTNDPNVGGFGQIDTEIVLQSSNRVLGVIAFFFAVMLAQIMLVLKKKQVEKVQAAELNF</sequence>
<gene>
    <name evidence="1" type="primary">petA</name>
    <name type="ordered locus">syc0319_d</name>
</gene>
<reference key="1">
    <citation type="journal article" date="2007" name="Photosyn. Res.">
        <title>Complete nucleotide sequence of the freshwater unicellular cyanobacterium Synechococcus elongatus PCC 6301 chromosome: gene content and organization.</title>
        <authorList>
            <person name="Sugita C."/>
            <person name="Ogata K."/>
            <person name="Shikata M."/>
            <person name="Jikuya H."/>
            <person name="Takano J."/>
            <person name="Furumichi M."/>
            <person name="Kanehisa M."/>
            <person name="Omata T."/>
            <person name="Sugiura M."/>
            <person name="Sugita M."/>
        </authorList>
    </citation>
    <scope>NUCLEOTIDE SEQUENCE [LARGE SCALE GENOMIC DNA]</scope>
    <source>
        <strain>ATCC 27144 / PCC 6301 / SAUG 1402/1</strain>
    </source>
</reference>
<proteinExistence type="inferred from homology"/>
<organism>
    <name type="scientific">Synechococcus sp. (strain ATCC 27144 / PCC 6301 / SAUG 1402/1)</name>
    <name type="common">Anacystis nidulans</name>
    <dbReference type="NCBI Taxonomy" id="269084"/>
    <lineage>
        <taxon>Bacteria</taxon>
        <taxon>Bacillati</taxon>
        <taxon>Cyanobacteriota</taxon>
        <taxon>Cyanophyceae</taxon>
        <taxon>Synechococcales</taxon>
        <taxon>Synechococcaceae</taxon>
        <taxon>Synechococcus</taxon>
    </lineage>
</organism>
<accession>Q5N5A9</accession>
<evidence type="ECO:0000255" key="1">
    <source>
        <dbReference type="HAMAP-Rule" id="MF_00610"/>
    </source>
</evidence>